<feature type="chain" id="PRO_0000240190" description="Acidic leucine-rich nuclear phosphoprotein 32 family member B">
    <location>
        <begin position="1"/>
        <end position="239"/>
    </location>
</feature>
<feature type="repeat" description="LRR 1">
    <location>
        <begin position="16"/>
        <end position="40"/>
    </location>
</feature>
<feature type="repeat" description="LRR 2">
    <location>
        <begin position="43"/>
        <end position="64"/>
    </location>
</feature>
<feature type="repeat" description="LRR 3">
    <location>
        <begin position="65"/>
        <end position="87"/>
    </location>
</feature>
<feature type="repeat" description="LRR 4">
    <location>
        <begin position="89"/>
        <end position="110"/>
    </location>
</feature>
<feature type="domain" description="LRRCT">
    <location>
        <begin position="123"/>
        <end position="165"/>
    </location>
</feature>
<feature type="region of interest" description="Disordered" evidence="2">
    <location>
        <begin position="149"/>
        <end position="239"/>
    </location>
</feature>
<feature type="compositionally biased region" description="Acidic residues" evidence="2">
    <location>
        <begin position="149"/>
        <end position="215"/>
    </location>
</feature>
<feature type="compositionally biased region" description="Basic and acidic residues" evidence="2">
    <location>
        <begin position="216"/>
        <end position="225"/>
    </location>
</feature>
<feature type="compositionally biased region" description="Acidic residues" evidence="2">
    <location>
        <begin position="226"/>
        <end position="239"/>
    </location>
</feature>
<evidence type="ECO:0000250" key="1"/>
<evidence type="ECO:0000256" key="2">
    <source>
        <dbReference type="SAM" id="MobiDB-lite"/>
    </source>
</evidence>
<evidence type="ECO:0000305" key="3"/>
<reference key="1">
    <citation type="submission" date="2003-01" db="EMBL/GenBank/DDBJ databases">
        <authorList>
            <consortium name="NIH - Xenopus Gene Collection (XGC) project"/>
        </authorList>
    </citation>
    <scope>NUCLEOTIDE SEQUENCE [LARGE SCALE MRNA]</scope>
    <source>
        <tissue>Embryo</tissue>
    </source>
</reference>
<reference key="2">
    <citation type="journal article" date="2005" name="Cerebellum">
        <title>The Anp32 family of proteins containing leucine-rich repeats.</title>
        <authorList>
            <person name="Matilla A."/>
            <person name="Radrizzani M."/>
        </authorList>
    </citation>
    <scope>GENE FAMILY</scope>
    <scope>NOMENCLATURE</scope>
</reference>
<proteinExistence type="evidence at transcript level"/>
<sequence length="239" mass="27416">MDMKKRLMLELRNRKAADAKELVLDNCRSDDGKIIGLTSEFESLEFLSMINVNLLSVANLPKLPKLKKLELSDNRISGGLEVLAERTPNLTHLNLSGNKIKEINTLEPLKKLPHLMSLDLFNCEVTMLNNYRESVFELLPKLTFLDGFDADDQEAPDSDPEAEDLEENGEDGEEDEEDDEEEEEFEDELDDEDEDEEGEEEEDGEEEDEDDEDVPQGEKRKRDLSDEGEEEEEDDEDDE</sequence>
<dbReference type="EMBL" id="BC042250">
    <property type="protein sequence ID" value="AAH42250.1"/>
    <property type="molecule type" value="mRNA"/>
</dbReference>
<dbReference type="RefSeq" id="NP_001079433.1">
    <property type="nucleotide sequence ID" value="NM_001085964.1"/>
</dbReference>
<dbReference type="SMR" id="Q8AVC1"/>
<dbReference type="BioGRID" id="97363">
    <property type="interactions" value="1"/>
</dbReference>
<dbReference type="DNASU" id="379120"/>
<dbReference type="GeneID" id="379120"/>
<dbReference type="KEGG" id="xla:379120"/>
<dbReference type="AGR" id="Xenbase:XB-GENE-17337640"/>
<dbReference type="CTD" id="379120"/>
<dbReference type="Xenbase" id="XB-GENE-17337640">
    <property type="gene designation" value="anp32c.L"/>
</dbReference>
<dbReference type="OrthoDB" id="2160613at2759"/>
<dbReference type="Proteomes" id="UP000186698">
    <property type="component" value="Chromosome 1L"/>
</dbReference>
<dbReference type="Bgee" id="379120">
    <property type="expression patterns" value="Expressed in gastrula and 19 other cell types or tissues"/>
</dbReference>
<dbReference type="GO" id="GO:0005634">
    <property type="term" value="C:nucleus"/>
    <property type="evidence" value="ECO:0000318"/>
    <property type="project" value="GO_Central"/>
</dbReference>
<dbReference type="GO" id="GO:0042393">
    <property type="term" value="F:histone binding"/>
    <property type="evidence" value="ECO:0000318"/>
    <property type="project" value="GO_Central"/>
</dbReference>
<dbReference type="GO" id="GO:0042981">
    <property type="term" value="P:regulation of apoptotic process"/>
    <property type="evidence" value="ECO:0000318"/>
    <property type="project" value="GO_Central"/>
</dbReference>
<dbReference type="FunFam" id="3.80.10.10:FF:000003">
    <property type="entry name" value="Acidic leucine-rich nuclear phosphoprotein 32 family member A"/>
    <property type="match status" value="1"/>
</dbReference>
<dbReference type="Gene3D" id="3.80.10.10">
    <property type="entry name" value="Ribonuclease Inhibitor"/>
    <property type="match status" value="1"/>
</dbReference>
<dbReference type="InterPro" id="IPR045081">
    <property type="entry name" value="AN32"/>
</dbReference>
<dbReference type="InterPro" id="IPR001611">
    <property type="entry name" value="Leu-rich_rpt"/>
</dbReference>
<dbReference type="InterPro" id="IPR032675">
    <property type="entry name" value="LRR_dom_sf"/>
</dbReference>
<dbReference type="PANTHER" id="PTHR11375">
    <property type="entry name" value="ACIDIC LEUCINE-RICH NUCLEAR PHOSPHOPROTEIN 32"/>
    <property type="match status" value="1"/>
</dbReference>
<dbReference type="PANTHER" id="PTHR11375:SF22">
    <property type="entry name" value="ACIDIC LEUCINE-RICH NUCLEAR PHOSPHOPROTEIN 32 FAMILY MEMBER B"/>
    <property type="match status" value="1"/>
</dbReference>
<dbReference type="Pfam" id="PF14580">
    <property type="entry name" value="LRR_9"/>
    <property type="match status" value="1"/>
</dbReference>
<dbReference type="SUPFAM" id="SSF52058">
    <property type="entry name" value="L domain-like"/>
    <property type="match status" value="1"/>
</dbReference>
<dbReference type="PROSITE" id="PS51450">
    <property type="entry name" value="LRR"/>
    <property type="match status" value="4"/>
</dbReference>
<protein>
    <recommendedName>
        <fullName>Acidic leucine-rich nuclear phosphoprotein 32 family member B</fullName>
    </recommendedName>
</protein>
<organism>
    <name type="scientific">Xenopus laevis</name>
    <name type="common">African clawed frog</name>
    <dbReference type="NCBI Taxonomy" id="8355"/>
    <lineage>
        <taxon>Eukaryota</taxon>
        <taxon>Metazoa</taxon>
        <taxon>Chordata</taxon>
        <taxon>Craniata</taxon>
        <taxon>Vertebrata</taxon>
        <taxon>Euteleostomi</taxon>
        <taxon>Amphibia</taxon>
        <taxon>Batrachia</taxon>
        <taxon>Anura</taxon>
        <taxon>Pipoidea</taxon>
        <taxon>Pipidae</taxon>
        <taxon>Xenopodinae</taxon>
        <taxon>Xenopus</taxon>
        <taxon>Xenopus</taxon>
    </lineage>
</organism>
<accession>Q8AVC1</accession>
<name>AN32B_XENLA</name>
<gene>
    <name type="primary">anp32b</name>
</gene>
<comment type="function">
    <text evidence="1">Multifunctional protein working as a cell cycle progression factor as well as a cell survival factor. Required for the progression from the G1 to the S phase. Anti-apoptotic protein which functions as a caspase-3 inhibitor. Has no phosphatase 2A (PP2A) inhibitor activity. Exhibits histone chaperone properties, stimulating core histones to assemble into a nucleosome (By similarity).</text>
</comment>
<comment type="subcellular location">
    <subcellularLocation>
        <location evidence="1">Nucleus</location>
    </subcellularLocation>
</comment>
<comment type="domain">
    <text evidence="1">Histone binding is mediated by the concave surface of the LRR region.</text>
</comment>
<comment type="similarity">
    <text evidence="3">Belongs to the ANP32 family.</text>
</comment>
<keyword id="KW-0143">Chaperone</keyword>
<keyword id="KW-0433">Leucine-rich repeat</keyword>
<keyword id="KW-0539">Nucleus</keyword>
<keyword id="KW-1185">Reference proteome</keyword>
<keyword id="KW-0677">Repeat</keyword>